<reference key="1">
    <citation type="journal article" date="1986" name="J. Biol. Chem.">
        <title>The hemoglobin of Urechis caupo. The cDNA-derived amino acid sequence.</title>
        <authorList>
            <person name="Garey J.R."/>
            <person name="Riggs A.F."/>
        </authorList>
    </citation>
    <scope>NUCLEOTIDE SEQUENCE [MRNA]</scope>
</reference>
<reference key="2">
    <citation type="journal article" date="1992" name="Acta Crystallogr. B">
        <title>Structure determination and refinement of homotetrameric hemoglobin from Urechis caupo at 2.5-A resolution.</title>
        <authorList>
            <person name="Kolatkar P.R."/>
            <person name="Ernst S.R."/>
            <person name="Hackert M.L."/>
            <person name="Ogata C.M."/>
            <person name="Hendrickson W.A."/>
            <person name="Merrit E.A."/>
            <person name="Phizackerley R.P."/>
        </authorList>
    </citation>
    <scope>X-RAY CRYSTALLOGRAPHY (2.50 ANGSTROMS) OF 2-142 IN COMPLEX WITH HEME</scope>
</reference>
<reference key="3">
    <citation type="journal article" date="1994" name="J. Mol. Biol.">
        <title>Structural analysis of Urechis caupo hemoglobin.</title>
        <authorList>
            <person name="Kolatkar P.R."/>
            <person name="Hackert M.L."/>
            <person name="Riggs A.F."/>
        </authorList>
    </citation>
    <scope>X-RAY CRYSTALLOGRAPHY (2.5 ANGSTROMS)</scope>
</reference>
<sequence>MGLTTAQIKAIQDHWFLNIKGCLQAAADSIFFKYLTAYPGDLAFFHKFSSVPLYGLRSNPAYKAQTLTVINYLDKVVDALGGNAGALMKAKVPSHDAMGITPKHFGQLLKLVGGVFQEEFSADPTTVAAWGDAAGVLVAAMK</sequence>
<protein>
    <recommendedName>
        <fullName>Hemoglobin F-I</fullName>
    </recommendedName>
</protein>
<proteinExistence type="evidence at protein level"/>
<name>HBF1_URECA</name>
<accession>P06148</accession>
<keyword id="KW-0002">3D-structure</keyword>
<keyword id="KW-0349">Heme</keyword>
<keyword id="KW-0408">Iron</keyword>
<keyword id="KW-0479">Metal-binding</keyword>
<keyword id="KW-0561">Oxygen transport</keyword>
<keyword id="KW-0813">Transport</keyword>
<dbReference type="EMBL" id="J02624">
    <property type="protein sequence ID" value="AAA30331.1"/>
    <property type="molecule type" value="mRNA"/>
</dbReference>
<dbReference type="PIR" id="A25537">
    <property type="entry name" value="A25537"/>
</dbReference>
<dbReference type="PDB" id="1ITH">
    <property type="method" value="X-ray"/>
    <property type="resolution" value="2.50 A"/>
    <property type="chains" value="A/B=2-142"/>
</dbReference>
<dbReference type="PDBsum" id="1ITH"/>
<dbReference type="SMR" id="P06148"/>
<dbReference type="EvolutionaryTrace" id="P06148"/>
<dbReference type="GO" id="GO:0020037">
    <property type="term" value="F:heme binding"/>
    <property type="evidence" value="ECO:0007669"/>
    <property type="project" value="InterPro"/>
</dbReference>
<dbReference type="GO" id="GO:0046872">
    <property type="term" value="F:metal ion binding"/>
    <property type="evidence" value="ECO:0007669"/>
    <property type="project" value="UniProtKB-KW"/>
</dbReference>
<dbReference type="GO" id="GO:0019825">
    <property type="term" value="F:oxygen binding"/>
    <property type="evidence" value="ECO:0007669"/>
    <property type="project" value="InterPro"/>
</dbReference>
<dbReference type="GO" id="GO:0005344">
    <property type="term" value="F:oxygen carrier activity"/>
    <property type="evidence" value="ECO:0007669"/>
    <property type="project" value="UniProtKB-KW"/>
</dbReference>
<dbReference type="CDD" id="cd01040">
    <property type="entry name" value="Mb-like"/>
    <property type="match status" value="1"/>
</dbReference>
<dbReference type="Gene3D" id="1.10.490.10">
    <property type="entry name" value="Globins"/>
    <property type="match status" value="1"/>
</dbReference>
<dbReference type="InterPro" id="IPR000971">
    <property type="entry name" value="Globin"/>
</dbReference>
<dbReference type="InterPro" id="IPR009050">
    <property type="entry name" value="Globin-like_sf"/>
</dbReference>
<dbReference type="InterPro" id="IPR012292">
    <property type="entry name" value="Globin/Proto"/>
</dbReference>
<dbReference type="InterPro" id="IPR044399">
    <property type="entry name" value="Mb-like_M"/>
</dbReference>
<dbReference type="PANTHER" id="PTHR47217">
    <property type="entry name" value="GLOBIN-LIKE PROTEIN"/>
    <property type="match status" value="1"/>
</dbReference>
<dbReference type="PANTHER" id="PTHR47217:SF1">
    <property type="entry name" value="GLOBIN-LIKE PROTEIN"/>
    <property type="match status" value="1"/>
</dbReference>
<dbReference type="Pfam" id="PF00042">
    <property type="entry name" value="Globin"/>
    <property type="match status" value="1"/>
</dbReference>
<dbReference type="SUPFAM" id="SSF46458">
    <property type="entry name" value="Globin-like"/>
    <property type="match status" value="1"/>
</dbReference>
<dbReference type="PROSITE" id="PS01033">
    <property type="entry name" value="GLOBIN"/>
    <property type="match status" value="1"/>
</dbReference>
<comment type="function">
    <text>Hemoglobin F-I appears to function in storage, rather than transport of oxygen.</text>
</comment>
<comment type="subunit">
    <text>Homotetramer.</text>
</comment>
<comment type="miscellaneous">
    <text>Hemoglobin F-I binds oxygen non-cooperatively and almost independently of pH.</text>
</comment>
<comment type="similarity">
    <text evidence="1">Belongs to the globin family.</text>
</comment>
<evidence type="ECO:0000255" key="1">
    <source>
        <dbReference type="PROSITE-ProRule" id="PRU00238"/>
    </source>
</evidence>
<evidence type="ECO:0000269" key="2">
    <source>
    </source>
</evidence>
<evidence type="ECO:0007744" key="3">
    <source>
        <dbReference type="PDB" id="1ITH"/>
    </source>
</evidence>
<evidence type="ECO:0007829" key="4">
    <source>
        <dbReference type="PDB" id="1ITH"/>
    </source>
</evidence>
<organism>
    <name type="scientific">Urechis caupo</name>
    <name type="common">Innkeeper worm</name>
    <name type="synonym">Spoonworm</name>
    <dbReference type="NCBI Taxonomy" id="6431"/>
    <lineage>
        <taxon>Eukaryota</taxon>
        <taxon>Metazoa</taxon>
        <taxon>Spiralia</taxon>
        <taxon>Lophotrochozoa</taxon>
        <taxon>Annelida</taxon>
        <taxon>Polychaeta</taxon>
        <taxon>Echiura</taxon>
        <taxon>Xenopneusta</taxon>
        <taxon>Urechidae</taxon>
        <taxon>Urechis</taxon>
    </lineage>
</organism>
<feature type="initiator methionine" description="Removed">
    <location>
        <position position="1"/>
    </location>
</feature>
<feature type="chain" id="PRO_0000053232" description="Hemoglobin F-I">
    <location>
        <begin position="2"/>
        <end position="142"/>
    </location>
</feature>
<feature type="domain" description="Globin" evidence="1">
    <location>
        <begin position="2"/>
        <end position="142"/>
    </location>
</feature>
<feature type="binding site" description="proximal binding residue" evidence="2 3">
    <location>
        <position position="95"/>
    </location>
    <ligand>
        <name>heme b</name>
        <dbReference type="ChEBI" id="CHEBI:60344"/>
    </ligand>
    <ligandPart>
        <name>Fe</name>
        <dbReference type="ChEBI" id="CHEBI:18248"/>
    </ligandPart>
</feature>
<feature type="helix" evidence="4">
    <location>
        <begin position="5"/>
        <end position="18"/>
    </location>
</feature>
<feature type="helix" evidence="4">
    <location>
        <begin position="20"/>
        <end position="22"/>
    </location>
</feature>
<feature type="helix" evidence="4">
    <location>
        <begin position="23"/>
        <end position="37"/>
    </location>
</feature>
<feature type="helix" evidence="4">
    <location>
        <begin position="39"/>
        <end position="44"/>
    </location>
</feature>
<feature type="turn" evidence="4">
    <location>
        <begin position="46"/>
        <end position="50"/>
    </location>
</feature>
<feature type="helix" evidence="4">
    <location>
        <begin position="53"/>
        <end position="58"/>
    </location>
</feature>
<feature type="helix" evidence="4">
    <location>
        <begin position="60"/>
        <end position="78"/>
    </location>
</feature>
<feature type="turn" evidence="4">
    <location>
        <begin position="79"/>
        <end position="83"/>
    </location>
</feature>
<feature type="helix" evidence="4">
    <location>
        <begin position="84"/>
        <end position="89"/>
    </location>
</feature>
<feature type="helix" evidence="4">
    <location>
        <begin position="92"/>
        <end position="96"/>
    </location>
</feature>
<feature type="turn" evidence="4">
    <location>
        <begin position="97"/>
        <end position="99"/>
    </location>
</feature>
<feature type="helix" evidence="4">
    <location>
        <begin position="102"/>
        <end position="119"/>
    </location>
</feature>
<feature type="helix" evidence="4">
    <location>
        <begin position="124"/>
        <end position="139"/>
    </location>
</feature>